<organism>
    <name type="scientific">Caenorhabditis elegans</name>
    <dbReference type="NCBI Taxonomy" id="6239"/>
    <lineage>
        <taxon>Eukaryota</taxon>
        <taxon>Metazoa</taxon>
        <taxon>Ecdysozoa</taxon>
        <taxon>Nematoda</taxon>
        <taxon>Chromadorea</taxon>
        <taxon>Rhabditida</taxon>
        <taxon>Rhabditina</taxon>
        <taxon>Rhabditomorpha</taxon>
        <taxon>Rhabditoidea</taxon>
        <taxon>Rhabditidae</taxon>
        <taxon>Peloderinae</taxon>
        <taxon>Caenorhabditis</taxon>
    </lineage>
</organism>
<keyword id="KW-0025">Alternative splicing</keyword>
<keyword id="KW-1185">Reference proteome</keyword>
<proteinExistence type="predicted"/>
<protein>
    <recommendedName>
        <fullName>Uncharacterized protein C45G9.6</fullName>
    </recommendedName>
</protein>
<accession>Q09279</accession>
<name>YQI6_CAEEL</name>
<evidence type="ECO:0000256" key="1">
    <source>
        <dbReference type="SAM" id="MobiDB-lite"/>
    </source>
</evidence>
<evidence type="ECO:0000305" key="2"/>
<gene>
    <name type="ORF">C45G9.6</name>
</gene>
<feature type="chain" id="PRO_0000065238" description="Uncharacterized protein C45G9.6">
    <location>
        <begin position="1"/>
        <end position="542"/>
    </location>
</feature>
<feature type="region of interest" description="Disordered" evidence="1">
    <location>
        <begin position="256"/>
        <end position="275"/>
    </location>
</feature>
<feature type="compositionally biased region" description="Low complexity" evidence="1">
    <location>
        <begin position="258"/>
        <end position="269"/>
    </location>
</feature>
<feature type="splice variant" id="VSP_002443" description="In isoform b." evidence="2">
    <original>D</original>
    <variation>G</variation>
    <location>
        <position position="155"/>
    </location>
</feature>
<feature type="splice variant" id="VSP_002444" description="In isoform b." evidence="2">
    <location>
        <begin position="156"/>
        <end position="542"/>
    </location>
</feature>
<reference key="1">
    <citation type="journal article" date="1998" name="Science">
        <title>Genome sequence of the nematode C. elegans: a platform for investigating biology.</title>
        <authorList>
            <consortium name="The C. elegans sequencing consortium"/>
        </authorList>
    </citation>
    <scope>NUCLEOTIDE SEQUENCE [LARGE SCALE GENOMIC DNA]</scope>
    <scope>ALTERNATIVE SPLICING</scope>
    <source>
        <strain>Bristol N2</strain>
    </source>
</reference>
<dbReference type="EMBL" id="FO080873">
    <property type="protein sequence ID" value="CCD67394.1"/>
    <property type="molecule type" value="Genomic_DNA"/>
</dbReference>
<dbReference type="EMBL" id="FO080873">
    <property type="protein sequence ID" value="CCD67395.1"/>
    <property type="molecule type" value="Genomic_DNA"/>
</dbReference>
<dbReference type="RefSeq" id="NP_741124.1">
    <property type="nucleotide sequence ID" value="NM_171110.3"/>
</dbReference>
<dbReference type="RefSeq" id="NP_741125.1">
    <molecule id="Q09279-2"/>
    <property type="nucleotide sequence ID" value="NM_171111.8"/>
</dbReference>
<dbReference type="BioGRID" id="40917">
    <property type="interactions" value="1"/>
</dbReference>
<dbReference type="FunCoup" id="Q09279">
    <property type="interactions" value="1521"/>
</dbReference>
<dbReference type="PaxDb" id="6239-C45G9.6a"/>
<dbReference type="PeptideAtlas" id="Q09279"/>
<dbReference type="EnsemblMetazoa" id="C45G9.6a.1">
    <property type="protein sequence ID" value="C45G9.6a.1"/>
    <property type="gene ID" value="WBGene00016677"/>
</dbReference>
<dbReference type="EnsemblMetazoa" id="C45G9.6b.1">
    <molecule id="Q09279-2"/>
    <property type="protein sequence ID" value="C45G9.6b.1"/>
    <property type="gene ID" value="WBGene00016677"/>
</dbReference>
<dbReference type="GeneID" id="175684"/>
<dbReference type="KEGG" id="cel:CELE_C45G9.6"/>
<dbReference type="UCSC" id="C45G9.6b">
    <molecule id="Q09279-1"/>
    <property type="organism name" value="c. elegans"/>
</dbReference>
<dbReference type="AGR" id="WB:WBGene00016677"/>
<dbReference type="CTD" id="175684"/>
<dbReference type="WormBase" id="C45G9.6a">
    <molecule id="Q09279-1"/>
    <property type="protein sequence ID" value="CE30633"/>
    <property type="gene ID" value="WBGene00016677"/>
</dbReference>
<dbReference type="WormBase" id="C45G9.6b">
    <molecule id="Q09279-2"/>
    <property type="protein sequence ID" value="CE30634"/>
    <property type="gene ID" value="WBGene00016677"/>
</dbReference>
<dbReference type="eggNOG" id="ENOG502TGQG">
    <property type="taxonomic scope" value="Eukaryota"/>
</dbReference>
<dbReference type="HOGENOM" id="CLU_043991_0_0_1"/>
<dbReference type="InParanoid" id="Q09279"/>
<dbReference type="OMA" id="MNQICTT"/>
<dbReference type="OrthoDB" id="5836547at2759"/>
<dbReference type="PRO" id="PR:Q09279"/>
<dbReference type="Proteomes" id="UP000001940">
    <property type="component" value="Chromosome III"/>
</dbReference>
<dbReference type="Bgee" id="WBGene00016677">
    <property type="expression patterns" value="Expressed in larva and 2 other cell types or tissues"/>
</dbReference>
<dbReference type="InterPro" id="IPR052326">
    <property type="entry name" value="Diff-Dev_Assoc_Protein"/>
</dbReference>
<dbReference type="PANTHER" id="PTHR33459">
    <property type="entry name" value="DD-GDCA PROTEIN"/>
    <property type="match status" value="1"/>
</dbReference>
<dbReference type="PANTHER" id="PTHR33459:SF7">
    <property type="entry name" value="DD-GDCA PROTEIN"/>
    <property type="match status" value="1"/>
</dbReference>
<sequence>MILALLLLCSTITQFSDGYVIGGGTQPGGNQNNPNSPTYNGGIGGGVYPGGGGNNGGVQRDEGGYCNSNTDCRSGLYCTASVNGVKICLSTSNGGGGNGFPSGNGGCQTSSNCQYGSVCVVTNGQGNCQIQTGGYVSPARQGMVRYPSSNSITVDFNEDVFSKNAPEPGKINSGCERDADCDDELSCTMYFGEMMCRSPIKPLIPLRCESDAECPSTEYLCVFSTAMQDRVCYKYGDVVTDGYVIPIKHKISMELKKSTTTSSPPITTTHLSKPEESNGLFAESEAIFEQPGSLLTSALQKRADKMSQNGPTPPMYVKMSDIPSEHVIAGQHDGEAVRITKVVVKEEKEMEENGETREKVIPKIGEGVGMVDDEPIDPMATVCQFDYHCRMGESCSGRVRFVDRNVTVCRYDMFKKHRQCLYHSDCISGQRCTPTGRDIATCETDISATIGSIQCFYDYECSGGEKCTLVDEKERKFVCRPSPTSDPRMNQICTTNSQCPFQQVCRQSGGVSLCVDVSIARNPALLHERLWRFLRNFILRTL</sequence>
<comment type="alternative products">
    <event type="alternative splicing"/>
    <isoform>
        <id>Q09279-1</id>
        <name>a</name>
        <sequence type="displayed"/>
    </isoform>
    <isoform>
        <id>Q09279-2</id>
        <name>b</name>
        <sequence type="described" ref="VSP_002443 VSP_002444"/>
    </isoform>
</comment>